<keyword id="KW-0067">ATP-binding</keyword>
<keyword id="KW-0175">Coiled coil</keyword>
<keyword id="KW-0493">Microtubule</keyword>
<keyword id="KW-0505">Motor protein</keyword>
<keyword id="KW-0547">Nucleotide-binding</keyword>
<keyword id="KW-1185">Reference proteome</keyword>
<comment type="similarity">
    <text evidence="4">Belongs to the TRAFAC class myosin-kinesin ATPase superfamily. Kinesin family. KIN-12 subfamily.</text>
</comment>
<comment type="sequence caution" evidence="5">
    <conflict type="erroneous gene model prediction">
        <sequence resource="EMBL-CDS" id="CAB88133"/>
    </conflict>
</comment>
<proteinExistence type="inferred from homology"/>
<name>KN12E_ARATH</name>
<feature type="chain" id="PRO_0000437192" description="Kinesin-like protein KIN-12E">
    <location>
        <begin position="1"/>
        <end position="1263"/>
    </location>
</feature>
<feature type="domain" description="Kinesin motor" evidence="2">
    <location>
        <begin position="93"/>
        <end position="430"/>
    </location>
</feature>
<feature type="region of interest" description="Disordered" evidence="3">
    <location>
        <begin position="21"/>
        <end position="44"/>
    </location>
</feature>
<feature type="coiled-coil region" evidence="1">
    <location>
        <begin position="679"/>
        <end position="737"/>
    </location>
</feature>
<feature type="coiled-coil region" evidence="1">
    <location>
        <begin position="764"/>
        <end position="805"/>
    </location>
</feature>
<feature type="coiled-coil region" evidence="1">
    <location>
        <begin position="831"/>
        <end position="881"/>
    </location>
</feature>
<feature type="coiled-coil region" evidence="1">
    <location>
        <begin position="905"/>
        <end position="966"/>
    </location>
</feature>
<feature type="coiled-coil region" evidence="1">
    <location>
        <begin position="1091"/>
        <end position="1168"/>
    </location>
</feature>
<feature type="coiled-coil region" evidence="1">
    <location>
        <begin position="1193"/>
        <end position="1251"/>
    </location>
</feature>
<feature type="compositionally biased region" description="Polar residues" evidence="3">
    <location>
        <begin position="35"/>
        <end position="44"/>
    </location>
</feature>
<feature type="binding site" evidence="2">
    <location>
        <begin position="174"/>
        <end position="181"/>
    </location>
    <ligand>
        <name>ATP</name>
        <dbReference type="ChEBI" id="CHEBI:30616"/>
    </ligand>
</feature>
<dbReference type="EMBL" id="AL163975">
    <property type="protein sequence ID" value="CAB88133.1"/>
    <property type="status" value="ALT_SEQ"/>
    <property type="molecule type" value="Genomic_DNA"/>
</dbReference>
<dbReference type="EMBL" id="AL353814">
    <property type="status" value="NOT_ANNOTATED_CDS"/>
    <property type="molecule type" value="Genomic_DNA"/>
</dbReference>
<dbReference type="EMBL" id="CP002686">
    <property type="protein sequence ID" value="AEE77856.1"/>
    <property type="molecule type" value="Genomic_DNA"/>
</dbReference>
<dbReference type="PIR" id="T48959">
    <property type="entry name" value="T48959"/>
</dbReference>
<dbReference type="RefSeq" id="NP_189991.2">
    <property type="nucleotide sequence ID" value="NM_114273.4"/>
</dbReference>
<dbReference type="SMR" id="F4J1U4"/>
<dbReference type="FunCoup" id="F4J1U4">
    <property type="interactions" value="537"/>
</dbReference>
<dbReference type="STRING" id="3702.F4J1U4"/>
<dbReference type="iPTMnet" id="F4J1U4"/>
<dbReference type="PaxDb" id="3702-AT3G44050.1"/>
<dbReference type="ProteomicsDB" id="238400"/>
<dbReference type="EnsemblPlants" id="AT3G44050.1">
    <property type="protein sequence ID" value="AT3G44050.1"/>
    <property type="gene ID" value="AT3G44050"/>
</dbReference>
<dbReference type="GeneID" id="823523"/>
<dbReference type="Gramene" id="AT3G44050.1">
    <property type="protein sequence ID" value="AT3G44050.1"/>
    <property type="gene ID" value="AT3G44050"/>
</dbReference>
<dbReference type="KEGG" id="ath:AT3G44050"/>
<dbReference type="Araport" id="AT3G44050"/>
<dbReference type="TAIR" id="AT3G44050"/>
<dbReference type="eggNOG" id="KOG4280">
    <property type="taxonomic scope" value="Eukaryota"/>
</dbReference>
<dbReference type="HOGENOM" id="CLU_005600_1_0_1"/>
<dbReference type="InParanoid" id="F4J1U4"/>
<dbReference type="OMA" id="KCIRQES"/>
<dbReference type="PRO" id="PR:F4J1U4"/>
<dbReference type="Proteomes" id="UP000006548">
    <property type="component" value="Chromosome 3"/>
</dbReference>
<dbReference type="ExpressionAtlas" id="F4J1U4">
    <property type="expression patterns" value="baseline and differential"/>
</dbReference>
<dbReference type="GO" id="GO:0005874">
    <property type="term" value="C:microtubule"/>
    <property type="evidence" value="ECO:0007669"/>
    <property type="project" value="UniProtKB-KW"/>
</dbReference>
<dbReference type="GO" id="GO:0005641">
    <property type="term" value="C:nuclear envelope lumen"/>
    <property type="evidence" value="ECO:0000314"/>
    <property type="project" value="TAIR"/>
</dbReference>
<dbReference type="GO" id="GO:0009524">
    <property type="term" value="C:phragmoplast"/>
    <property type="evidence" value="ECO:0000314"/>
    <property type="project" value="TAIR"/>
</dbReference>
<dbReference type="GO" id="GO:0005819">
    <property type="term" value="C:spindle"/>
    <property type="evidence" value="ECO:0000314"/>
    <property type="project" value="TAIR"/>
</dbReference>
<dbReference type="GO" id="GO:0005524">
    <property type="term" value="F:ATP binding"/>
    <property type="evidence" value="ECO:0007669"/>
    <property type="project" value="UniProtKB-KW"/>
</dbReference>
<dbReference type="GO" id="GO:0008017">
    <property type="term" value="F:microtubule binding"/>
    <property type="evidence" value="ECO:0007669"/>
    <property type="project" value="InterPro"/>
</dbReference>
<dbReference type="GO" id="GO:0003777">
    <property type="term" value="F:microtubule motor activity"/>
    <property type="evidence" value="ECO:0007669"/>
    <property type="project" value="InterPro"/>
</dbReference>
<dbReference type="GO" id="GO:0007018">
    <property type="term" value="P:microtubule-based movement"/>
    <property type="evidence" value="ECO:0007669"/>
    <property type="project" value="InterPro"/>
</dbReference>
<dbReference type="GO" id="GO:0051225">
    <property type="term" value="P:spindle assembly"/>
    <property type="evidence" value="ECO:0000315"/>
    <property type="project" value="TAIR"/>
</dbReference>
<dbReference type="FunFam" id="3.40.850.10:FF:000033">
    <property type="entry name" value="Kinesin-like protein KIN-12E"/>
    <property type="match status" value="1"/>
</dbReference>
<dbReference type="Gene3D" id="3.40.850.10">
    <property type="entry name" value="Kinesin motor domain"/>
    <property type="match status" value="1"/>
</dbReference>
<dbReference type="InterPro" id="IPR044986">
    <property type="entry name" value="KIF15/KIN-12"/>
</dbReference>
<dbReference type="InterPro" id="IPR019821">
    <property type="entry name" value="Kinesin_motor_CS"/>
</dbReference>
<dbReference type="InterPro" id="IPR001752">
    <property type="entry name" value="Kinesin_motor_dom"/>
</dbReference>
<dbReference type="InterPro" id="IPR036961">
    <property type="entry name" value="Kinesin_motor_dom_sf"/>
</dbReference>
<dbReference type="InterPro" id="IPR027417">
    <property type="entry name" value="P-loop_NTPase"/>
</dbReference>
<dbReference type="PANTHER" id="PTHR37739">
    <property type="entry name" value="KINESIN-LIKE PROTEIN KIN-12D"/>
    <property type="match status" value="1"/>
</dbReference>
<dbReference type="PANTHER" id="PTHR37739:SF14">
    <property type="entry name" value="KINESIN-LIKE PROTEIN KIN-12E"/>
    <property type="match status" value="1"/>
</dbReference>
<dbReference type="Pfam" id="PF00225">
    <property type="entry name" value="Kinesin"/>
    <property type="match status" value="1"/>
</dbReference>
<dbReference type="PRINTS" id="PR00380">
    <property type="entry name" value="KINESINHEAVY"/>
</dbReference>
<dbReference type="SMART" id="SM00129">
    <property type="entry name" value="KISc"/>
    <property type="match status" value="1"/>
</dbReference>
<dbReference type="SUPFAM" id="SSF52540">
    <property type="entry name" value="P-loop containing nucleoside triphosphate hydrolases"/>
    <property type="match status" value="1"/>
</dbReference>
<dbReference type="PROSITE" id="PS00411">
    <property type="entry name" value="KINESIN_MOTOR_1"/>
    <property type="match status" value="1"/>
</dbReference>
<dbReference type="PROSITE" id="PS50067">
    <property type="entry name" value="KINESIN_MOTOR_2"/>
    <property type="match status" value="1"/>
</dbReference>
<reference key="1">
    <citation type="journal article" date="2000" name="Nature">
        <title>Sequence and analysis of chromosome 3 of the plant Arabidopsis thaliana.</title>
        <authorList>
            <person name="Salanoubat M."/>
            <person name="Lemcke K."/>
            <person name="Rieger M."/>
            <person name="Ansorge W."/>
            <person name="Unseld M."/>
            <person name="Fartmann B."/>
            <person name="Valle G."/>
            <person name="Bloecker H."/>
            <person name="Perez-Alonso M."/>
            <person name="Obermaier B."/>
            <person name="Delseny M."/>
            <person name="Boutry M."/>
            <person name="Grivell L.A."/>
            <person name="Mache R."/>
            <person name="Puigdomenech P."/>
            <person name="De Simone V."/>
            <person name="Choisne N."/>
            <person name="Artiguenave F."/>
            <person name="Robert C."/>
            <person name="Brottier P."/>
            <person name="Wincker P."/>
            <person name="Cattolico L."/>
            <person name="Weissenbach J."/>
            <person name="Saurin W."/>
            <person name="Quetier F."/>
            <person name="Schaefer M."/>
            <person name="Mueller-Auer S."/>
            <person name="Gabel C."/>
            <person name="Fuchs M."/>
            <person name="Benes V."/>
            <person name="Wurmbach E."/>
            <person name="Drzonek H."/>
            <person name="Erfle H."/>
            <person name="Jordan N."/>
            <person name="Bangert S."/>
            <person name="Wiedelmann R."/>
            <person name="Kranz H."/>
            <person name="Voss H."/>
            <person name="Holland R."/>
            <person name="Brandt P."/>
            <person name="Nyakatura G."/>
            <person name="Vezzi A."/>
            <person name="D'Angelo M."/>
            <person name="Pallavicini A."/>
            <person name="Toppo S."/>
            <person name="Simionati B."/>
            <person name="Conrad A."/>
            <person name="Hornischer K."/>
            <person name="Kauer G."/>
            <person name="Loehnert T.-H."/>
            <person name="Nordsiek G."/>
            <person name="Reichelt J."/>
            <person name="Scharfe M."/>
            <person name="Schoen O."/>
            <person name="Bargues M."/>
            <person name="Terol J."/>
            <person name="Climent J."/>
            <person name="Navarro P."/>
            <person name="Collado C."/>
            <person name="Perez-Perez A."/>
            <person name="Ottenwaelder B."/>
            <person name="Duchemin D."/>
            <person name="Cooke R."/>
            <person name="Laudie M."/>
            <person name="Berger-Llauro C."/>
            <person name="Purnelle B."/>
            <person name="Masuy D."/>
            <person name="de Haan M."/>
            <person name="Maarse A.C."/>
            <person name="Alcaraz J.-P."/>
            <person name="Cottet A."/>
            <person name="Casacuberta E."/>
            <person name="Monfort A."/>
            <person name="Argiriou A."/>
            <person name="Flores M."/>
            <person name="Liguori R."/>
            <person name="Vitale D."/>
            <person name="Mannhaupt G."/>
            <person name="Haase D."/>
            <person name="Schoof H."/>
            <person name="Rudd S."/>
            <person name="Zaccaria P."/>
            <person name="Mewes H.-W."/>
            <person name="Mayer K.F.X."/>
            <person name="Kaul S."/>
            <person name="Town C.D."/>
            <person name="Koo H.L."/>
            <person name="Tallon L.J."/>
            <person name="Jenkins J."/>
            <person name="Rooney T."/>
            <person name="Rizzo M."/>
            <person name="Walts A."/>
            <person name="Utterback T."/>
            <person name="Fujii C.Y."/>
            <person name="Shea T.P."/>
            <person name="Creasy T.H."/>
            <person name="Haas B."/>
            <person name="Maiti R."/>
            <person name="Wu D."/>
            <person name="Peterson J."/>
            <person name="Van Aken S."/>
            <person name="Pai G."/>
            <person name="Militscher J."/>
            <person name="Sellers P."/>
            <person name="Gill J.E."/>
            <person name="Feldblyum T.V."/>
            <person name="Preuss D."/>
            <person name="Lin X."/>
            <person name="Nierman W.C."/>
            <person name="Salzberg S.L."/>
            <person name="White O."/>
            <person name="Venter J.C."/>
            <person name="Fraser C.M."/>
            <person name="Kaneko T."/>
            <person name="Nakamura Y."/>
            <person name="Sato S."/>
            <person name="Kato T."/>
            <person name="Asamizu E."/>
            <person name="Sasamoto S."/>
            <person name="Kimura T."/>
            <person name="Idesawa K."/>
            <person name="Kawashima K."/>
            <person name="Kishida Y."/>
            <person name="Kiyokawa C."/>
            <person name="Kohara M."/>
            <person name="Matsumoto M."/>
            <person name="Matsuno A."/>
            <person name="Muraki A."/>
            <person name="Nakayama S."/>
            <person name="Nakazaki N."/>
            <person name="Shinpo S."/>
            <person name="Takeuchi C."/>
            <person name="Wada T."/>
            <person name="Watanabe A."/>
            <person name="Yamada M."/>
            <person name="Yasuda M."/>
            <person name="Tabata S."/>
        </authorList>
    </citation>
    <scope>NUCLEOTIDE SEQUENCE [LARGE SCALE GENOMIC DNA]</scope>
    <source>
        <strain>cv. Columbia</strain>
    </source>
</reference>
<reference key="2">
    <citation type="journal article" date="2017" name="Plant J.">
        <title>Araport11: a complete reannotation of the Arabidopsis thaliana reference genome.</title>
        <authorList>
            <person name="Cheng C.Y."/>
            <person name="Krishnakumar V."/>
            <person name="Chan A.P."/>
            <person name="Thibaud-Nissen F."/>
            <person name="Schobel S."/>
            <person name="Town C.D."/>
        </authorList>
    </citation>
    <scope>GENOME REANNOTATION</scope>
    <source>
        <strain>cv. Columbia</strain>
    </source>
</reference>
<reference key="3">
    <citation type="journal article" date="2001" name="BMC Genomics">
        <title>Kinesins in the Arabidopsis genome: a comparative analysis among eukaryotes.</title>
        <authorList>
            <person name="Reddy A.S."/>
            <person name="Day I.S."/>
        </authorList>
    </citation>
    <scope>GENE FAMILY</scope>
</reference>
<reference key="4">
    <citation type="journal article" date="2006" name="BMC Genomics">
        <title>Comprehensive comparative analysis of kinesins in photosynthetic eukaryotes.</title>
        <authorList>
            <person name="Richardson D.N."/>
            <person name="Simmons M.P."/>
            <person name="Reddy A.S."/>
        </authorList>
    </citation>
    <scope>GENE FAMILY</scope>
    <scope>NOMENCLATURE</scope>
</reference>
<reference key="5">
    <citation type="journal article" date="2012" name="Protoplasma">
        <title>Functions of the Arabidopsis kinesin superfamily of microtubule-based motor proteins.</title>
        <authorList>
            <person name="Zhu C."/>
            <person name="Dixit R."/>
        </authorList>
    </citation>
    <scope>REVIEW</scope>
</reference>
<protein>
    <recommendedName>
        <fullName evidence="5">Kinesin-like protein KIN-12E</fullName>
    </recommendedName>
</protein>
<gene>
    <name evidence="5" type="primary">KIN12E</name>
    <name evidence="6" type="ordered locus">At3g44050</name>
    <name evidence="7" type="ORF">F26G5</name>
    <name evidence="8" type="ORF">T15B3_190</name>
</gene>
<organism>
    <name type="scientific">Arabidopsis thaliana</name>
    <name type="common">Mouse-ear cress</name>
    <dbReference type="NCBI Taxonomy" id="3702"/>
    <lineage>
        <taxon>Eukaryota</taxon>
        <taxon>Viridiplantae</taxon>
        <taxon>Streptophyta</taxon>
        <taxon>Embryophyta</taxon>
        <taxon>Tracheophyta</taxon>
        <taxon>Spermatophyta</taxon>
        <taxon>Magnoliopsida</taxon>
        <taxon>eudicotyledons</taxon>
        <taxon>Gunneridae</taxon>
        <taxon>Pentapetalae</taxon>
        <taxon>rosids</taxon>
        <taxon>malvids</taxon>
        <taxon>Brassicales</taxon>
        <taxon>Brassicaceae</taxon>
        <taxon>Camelineae</taxon>
        <taxon>Arabidopsis</taxon>
    </lineage>
</organism>
<sequence>MPFISETASAIKRRFGFNDRPAPSESLRSVPCTPEANTVSRDNHTHQSLLFSSAVRSMPELDEDGAICAGSAQISRSQSFEFNEDPAFWKDHNVQVIIRTRPLSSSEISVQGNNKCVRQDNGQAITWIGNPESRFTFDLVADENVSQEQMFKVAGVPMVENVVAGYNSCMFAYGQTGSGKTHTMLGDIEGGTRRHSVNCGMTPRVFEYLFSRIQKEKEVRKEEKLHFTCRCSFLEIYNEQILDLLDPSSYNLQLREDHKKGIHVENLKEIEVSSARDVIQQLMQGAANRKVAATNMNRASSRSHSVFTCIIESKWVSQGVTHHRFARLNLVDLAGSERQKSSGAEGERLKEATNINKSLSTLGLVIMNLVSVSNGKSVHVPYRDSKLTFLLQDSLGGNSKTIIIANISPSSSCSLETLSTLKFAQRAKLIKNNAIVNEDASGDVIAMRLQIQQLKKEVTRLRGMGGVDNQDMDTISMGCPASPMSLKWDGFNGSFTPLTTHKRMSKVKDYEVALVGAFRREREKDVALQALTAENEASMKLEKKREDEIRGLKMMLKLRDSAIKSLQGVTSGKIPVEAHLQKEKGDLMKEIEVLRAQVDRNQEVTKFATENLRLKEEIRRLKSQGEEGERDILNQQIQALQAKLLEALDWKLMHESDSSMVKEDGNISNMFCSNQNQESKKLSSIQDENEFLRMQAIQNRAEMESLQKSLSFSLDEKERLQKLVDNLSNELEGKIRSSGMVGDDDQMEVKTMVQAIACVSQREAEAHETAIKLSKENDDLRQKIKVLIEDNNKLIELYEQVAEENSSRAWGKIETDSSSNNADAQNSAEIALEVEKSAAEEQKKMIGNLENQLTEMHDENEKLMSLYENAMKEKDELKRLLSSPDQKKPIEANSDTEMELCNISSEKSTEDLNSAKLKLELAQEKLSISAKTIGVFSSLEENILDIIKLSKESKETEEKVKEHQSELGSIKTVSDQTNARKEVAEKKLAALRCSLSNFASSAVYFQQREERARAHVNSFSGYLNQKNEELDVIRSHKREIDAAMGKIQQSEAELKSNIVMLKIKVDEENKRHEEEGVLCTIDNILRTGKATDLLKSQEEKTKLQSEMKLSREKLASVRKEVDDMTKKSLKLEKEIKTMETEIEKSSKTRTESEMELENTIQEKQTIQEMEEQGMSEIQNMIIEIHQLVFESDLRKEEAMIIREELIAEELRAKDVHTNMIERVENALKTLENQNNSVSGKIEEEVENVLSLVHEASRLLEVSH</sequence>
<accession>F4J1U4</accession>
<accession>Q9LXV6</accession>
<evidence type="ECO:0000255" key="1"/>
<evidence type="ECO:0000255" key="2">
    <source>
        <dbReference type="PROSITE-ProRule" id="PRU00283"/>
    </source>
</evidence>
<evidence type="ECO:0000256" key="3">
    <source>
        <dbReference type="SAM" id="MobiDB-lite"/>
    </source>
</evidence>
<evidence type="ECO:0000303" key="4">
    <source>
    </source>
</evidence>
<evidence type="ECO:0000305" key="5"/>
<evidence type="ECO:0000312" key="6">
    <source>
        <dbReference type="Araport" id="AT3G44050"/>
    </source>
</evidence>
<evidence type="ECO:0000312" key="7">
    <source>
        <dbReference type="EMBL" id="AL353814"/>
    </source>
</evidence>
<evidence type="ECO:0000312" key="8">
    <source>
        <dbReference type="EMBL" id="CAB88133.1"/>
    </source>
</evidence>